<name>HFQ_YERPP</name>
<accession>A4TRN9</accession>
<protein>
    <recommendedName>
        <fullName evidence="1">RNA-binding protein Hfq</fullName>
    </recommendedName>
</protein>
<evidence type="ECO:0000255" key="1">
    <source>
        <dbReference type="HAMAP-Rule" id="MF_00436"/>
    </source>
</evidence>
<evidence type="ECO:0000255" key="2">
    <source>
        <dbReference type="PROSITE-ProRule" id="PRU01346"/>
    </source>
</evidence>
<evidence type="ECO:0000256" key="3">
    <source>
        <dbReference type="SAM" id="MobiDB-lite"/>
    </source>
</evidence>
<gene>
    <name evidence="1" type="primary">hfq</name>
    <name type="ordered locus">YPDSF_3601</name>
</gene>
<dbReference type="EMBL" id="CP000668">
    <property type="protein sequence ID" value="ABP41951.1"/>
    <property type="molecule type" value="Genomic_DNA"/>
</dbReference>
<dbReference type="RefSeq" id="WP_011906455.1">
    <property type="nucleotide sequence ID" value="NC_009381.1"/>
</dbReference>
<dbReference type="SMR" id="A4TRN9"/>
<dbReference type="KEGG" id="ypp:YPDSF_3601"/>
<dbReference type="GO" id="GO:0005829">
    <property type="term" value="C:cytosol"/>
    <property type="evidence" value="ECO:0007669"/>
    <property type="project" value="TreeGrafter"/>
</dbReference>
<dbReference type="GO" id="GO:0003723">
    <property type="term" value="F:RNA binding"/>
    <property type="evidence" value="ECO:0007669"/>
    <property type="project" value="UniProtKB-UniRule"/>
</dbReference>
<dbReference type="GO" id="GO:0006355">
    <property type="term" value="P:regulation of DNA-templated transcription"/>
    <property type="evidence" value="ECO:0007669"/>
    <property type="project" value="InterPro"/>
</dbReference>
<dbReference type="GO" id="GO:0043487">
    <property type="term" value="P:regulation of RNA stability"/>
    <property type="evidence" value="ECO:0007669"/>
    <property type="project" value="TreeGrafter"/>
</dbReference>
<dbReference type="GO" id="GO:0045974">
    <property type="term" value="P:regulation of translation, ncRNA-mediated"/>
    <property type="evidence" value="ECO:0007669"/>
    <property type="project" value="TreeGrafter"/>
</dbReference>
<dbReference type="CDD" id="cd01716">
    <property type="entry name" value="Hfq"/>
    <property type="match status" value="1"/>
</dbReference>
<dbReference type="FunFam" id="2.30.30.100:FF:000001">
    <property type="entry name" value="RNA-binding protein Hfq"/>
    <property type="match status" value="1"/>
</dbReference>
<dbReference type="Gene3D" id="2.30.30.100">
    <property type="match status" value="1"/>
</dbReference>
<dbReference type="HAMAP" id="MF_00436">
    <property type="entry name" value="Hfq"/>
    <property type="match status" value="1"/>
</dbReference>
<dbReference type="InterPro" id="IPR005001">
    <property type="entry name" value="Hfq"/>
</dbReference>
<dbReference type="InterPro" id="IPR010920">
    <property type="entry name" value="LSM_dom_sf"/>
</dbReference>
<dbReference type="InterPro" id="IPR047575">
    <property type="entry name" value="Sm"/>
</dbReference>
<dbReference type="NCBIfam" id="TIGR02383">
    <property type="entry name" value="Hfq"/>
    <property type="match status" value="1"/>
</dbReference>
<dbReference type="NCBIfam" id="NF001602">
    <property type="entry name" value="PRK00395.1"/>
    <property type="match status" value="1"/>
</dbReference>
<dbReference type="PANTHER" id="PTHR34772">
    <property type="entry name" value="RNA-BINDING PROTEIN HFQ"/>
    <property type="match status" value="1"/>
</dbReference>
<dbReference type="PANTHER" id="PTHR34772:SF1">
    <property type="entry name" value="RNA-BINDING PROTEIN HFQ"/>
    <property type="match status" value="1"/>
</dbReference>
<dbReference type="Pfam" id="PF17209">
    <property type="entry name" value="Hfq"/>
    <property type="match status" value="1"/>
</dbReference>
<dbReference type="SUPFAM" id="SSF50182">
    <property type="entry name" value="Sm-like ribonucleoproteins"/>
    <property type="match status" value="1"/>
</dbReference>
<dbReference type="PROSITE" id="PS52002">
    <property type="entry name" value="SM"/>
    <property type="match status" value="1"/>
</dbReference>
<sequence>MAKGQSLQDPFLNALRRERVPVSIYLVNGIKLQGQVESFDQFVILLKNTVSQMVYKHAISTVVPSPPVSHHSNTPSGSTNNYHGSNPSAPQQPQQDSDDAE</sequence>
<reference key="1">
    <citation type="submission" date="2007-02" db="EMBL/GenBank/DDBJ databases">
        <title>Complete sequence of chromosome of Yersinia pestis Pestoides F.</title>
        <authorList>
            <consortium name="US DOE Joint Genome Institute"/>
            <person name="Copeland A."/>
            <person name="Lucas S."/>
            <person name="Lapidus A."/>
            <person name="Barry K."/>
            <person name="Detter J.C."/>
            <person name="Glavina del Rio T."/>
            <person name="Hammon N."/>
            <person name="Israni S."/>
            <person name="Dalin E."/>
            <person name="Tice H."/>
            <person name="Pitluck S."/>
            <person name="Di Bartolo G."/>
            <person name="Chain P."/>
            <person name="Malfatti S."/>
            <person name="Shin M."/>
            <person name="Vergez L."/>
            <person name="Schmutz J."/>
            <person name="Larimer F."/>
            <person name="Land M."/>
            <person name="Hauser L."/>
            <person name="Worsham P."/>
            <person name="Chu M."/>
            <person name="Bearden S."/>
            <person name="Garcia E."/>
            <person name="Richardson P."/>
        </authorList>
    </citation>
    <scope>NUCLEOTIDE SEQUENCE [LARGE SCALE GENOMIC DNA]</scope>
    <source>
        <strain>Pestoides F</strain>
    </source>
</reference>
<comment type="function">
    <text evidence="1">RNA chaperone that binds small regulatory RNA (sRNAs) and mRNAs to facilitate mRNA translational regulation in response to envelope stress, environmental stress and changes in metabolite concentrations. Also binds with high specificity to tRNAs.</text>
</comment>
<comment type="subunit">
    <text evidence="1">Homohexamer.</text>
</comment>
<comment type="similarity">
    <text evidence="1">Belongs to the Hfq family.</text>
</comment>
<proteinExistence type="inferred from homology"/>
<keyword id="KW-0694">RNA-binding</keyword>
<keyword id="KW-0346">Stress response</keyword>
<organism>
    <name type="scientific">Yersinia pestis (strain Pestoides F)</name>
    <dbReference type="NCBI Taxonomy" id="386656"/>
    <lineage>
        <taxon>Bacteria</taxon>
        <taxon>Pseudomonadati</taxon>
        <taxon>Pseudomonadota</taxon>
        <taxon>Gammaproteobacteria</taxon>
        <taxon>Enterobacterales</taxon>
        <taxon>Yersiniaceae</taxon>
        <taxon>Yersinia</taxon>
    </lineage>
</organism>
<feature type="chain" id="PRO_1000025944" description="RNA-binding protein Hfq">
    <location>
        <begin position="1"/>
        <end position="101"/>
    </location>
</feature>
<feature type="domain" description="Sm" evidence="2">
    <location>
        <begin position="9"/>
        <end position="68"/>
    </location>
</feature>
<feature type="region of interest" description="Disordered" evidence="3">
    <location>
        <begin position="62"/>
        <end position="101"/>
    </location>
</feature>
<feature type="compositionally biased region" description="Polar residues" evidence="3">
    <location>
        <begin position="70"/>
        <end position="86"/>
    </location>
</feature>